<feature type="chain" id="PRO_1000052551" description="Large ribosomal subunit protein uL22">
    <location>
        <begin position="1"/>
        <end position="109"/>
    </location>
</feature>
<reference key="1">
    <citation type="submission" date="2007-03" db="EMBL/GenBank/DDBJ databases">
        <title>Complete sequence of chromosome 1 of Burkholderia vietnamiensis G4.</title>
        <authorList>
            <consortium name="US DOE Joint Genome Institute"/>
            <person name="Copeland A."/>
            <person name="Lucas S."/>
            <person name="Lapidus A."/>
            <person name="Barry K."/>
            <person name="Detter J.C."/>
            <person name="Glavina del Rio T."/>
            <person name="Hammon N."/>
            <person name="Israni S."/>
            <person name="Dalin E."/>
            <person name="Tice H."/>
            <person name="Pitluck S."/>
            <person name="Chain P."/>
            <person name="Malfatti S."/>
            <person name="Shin M."/>
            <person name="Vergez L."/>
            <person name="Schmutz J."/>
            <person name="Larimer F."/>
            <person name="Land M."/>
            <person name="Hauser L."/>
            <person name="Kyrpides N."/>
            <person name="Tiedje J."/>
            <person name="Richardson P."/>
        </authorList>
    </citation>
    <scope>NUCLEOTIDE SEQUENCE [LARGE SCALE GENOMIC DNA]</scope>
    <source>
        <strain>G4 / LMG 22486</strain>
    </source>
</reference>
<comment type="function">
    <text evidence="1">This protein binds specifically to 23S rRNA; its binding is stimulated by other ribosomal proteins, e.g. L4, L17, and L20. It is important during the early stages of 50S assembly. It makes multiple contacts with different domains of the 23S rRNA in the assembled 50S subunit and ribosome (By similarity).</text>
</comment>
<comment type="function">
    <text evidence="1">The globular domain of the protein is located near the polypeptide exit tunnel on the outside of the subunit, while an extended beta-hairpin is found that lines the wall of the exit tunnel in the center of the 70S ribosome.</text>
</comment>
<comment type="subunit">
    <text evidence="1">Part of the 50S ribosomal subunit.</text>
</comment>
<comment type="similarity">
    <text evidence="1">Belongs to the universal ribosomal protein uL22 family.</text>
</comment>
<organism>
    <name type="scientific">Burkholderia vietnamiensis (strain G4 / LMG 22486)</name>
    <name type="common">Burkholderia cepacia (strain R1808)</name>
    <dbReference type="NCBI Taxonomy" id="269482"/>
    <lineage>
        <taxon>Bacteria</taxon>
        <taxon>Pseudomonadati</taxon>
        <taxon>Pseudomonadota</taxon>
        <taxon>Betaproteobacteria</taxon>
        <taxon>Burkholderiales</taxon>
        <taxon>Burkholderiaceae</taxon>
        <taxon>Burkholderia</taxon>
        <taxon>Burkholderia cepacia complex</taxon>
    </lineage>
</organism>
<gene>
    <name evidence="1" type="primary">rplV</name>
    <name type="ordered locus">Bcep1808_0335</name>
</gene>
<accession>A4JAP5</accession>
<sequence length="109" mass="11816">MEVKAIHRGARISAQKTRLVADQIRGLPVDKALNVLTFSPKKAAGIVKKVVLSAIANAEHNEGADIDELKIKSIYVDKAASLKRFTARAKGRGNRIEKQSCHITVTVGN</sequence>
<protein>
    <recommendedName>
        <fullName evidence="1">Large ribosomal subunit protein uL22</fullName>
    </recommendedName>
    <alternativeName>
        <fullName evidence="2">50S ribosomal protein L22</fullName>
    </alternativeName>
</protein>
<dbReference type="EMBL" id="CP000614">
    <property type="protein sequence ID" value="ABO53348.1"/>
    <property type="molecule type" value="Genomic_DNA"/>
</dbReference>
<dbReference type="SMR" id="A4JAP5"/>
<dbReference type="KEGG" id="bvi:Bcep1808_0335"/>
<dbReference type="eggNOG" id="COG0091">
    <property type="taxonomic scope" value="Bacteria"/>
</dbReference>
<dbReference type="HOGENOM" id="CLU_083987_3_3_4"/>
<dbReference type="Proteomes" id="UP000002287">
    <property type="component" value="Chromosome 1"/>
</dbReference>
<dbReference type="GO" id="GO:0022625">
    <property type="term" value="C:cytosolic large ribosomal subunit"/>
    <property type="evidence" value="ECO:0007669"/>
    <property type="project" value="TreeGrafter"/>
</dbReference>
<dbReference type="GO" id="GO:0019843">
    <property type="term" value="F:rRNA binding"/>
    <property type="evidence" value="ECO:0007669"/>
    <property type="project" value="UniProtKB-UniRule"/>
</dbReference>
<dbReference type="GO" id="GO:0003735">
    <property type="term" value="F:structural constituent of ribosome"/>
    <property type="evidence" value="ECO:0007669"/>
    <property type="project" value="InterPro"/>
</dbReference>
<dbReference type="GO" id="GO:0006412">
    <property type="term" value="P:translation"/>
    <property type="evidence" value="ECO:0007669"/>
    <property type="project" value="UniProtKB-UniRule"/>
</dbReference>
<dbReference type="CDD" id="cd00336">
    <property type="entry name" value="Ribosomal_L22"/>
    <property type="match status" value="1"/>
</dbReference>
<dbReference type="FunFam" id="3.90.470.10:FF:000001">
    <property type="entry name" value="50S ribosomal protein L22"/>
    <property type="match status" value="1"/>
</dbReference>
<dbReference type="Gene3D" id="3.90.470.10">
    <property type="entry name" value="Ribosomal protein L22/L17"/>
    <property type="match status" value="1"/>
</dbReference>
<dbReference type="HAMAP" id="MF_01331_B">
    <property type="entry name" value="Ribosomal_uL22_B"/>
    <property type="match status" value="1"/>
</dbReference>
<dbReference type="InterPro" id="IPR001063">
    <property type="entry name" value="Ribosomal_uL22"/>
</dbReference>
<dbReference type="InterPro" id="IPR005727">
    <property type="entry name" value="Ribosomal_uL22_bac/chlpt-type"/>
</dbReference>
<dbReference type="InterPro" id="IPR047867">
    <property type="entry name" value="Ribosomal_uL22_bac/org-type"/>
</dbReference>
<dbReference type="InterPro" id="IPR018260">
    <property type="entry name" value="Ribosomal_uL22_CS"/>
</dbReference>
<dbReference type="InterPro" id="IPR036394">
    <property type="entry name" value="Ribosomal_uL22_sf"/>
</dbReference>
<dbReference type="NCBIfam" id="TIGR01044">
    <property type="entry name" value="rplV_bact"/>
    <property type="match status" value="1"/>
</dbReference>
<dbReference type="PANTHER" id="PTHR13501">
    <property type="entry name" value="CHLOROPLAST 50S RIBOSOMAL PROTEIN L22-RELATED"/>
    <property type="match status" value="1"/>
</dbReference>
<dbReference type="PANTHER" id="PTHR13501:SF8">
    <property type="entry name" value="LARGE RIBOSOMAL SUBUNIT PROTEIN UL22M"/>
    <property type="match status" value="1"/>
</dbReference>
<dbReference type="Pfam" id="PF00237">
    <property type="entry name" value="Ribosomal_L22"/>
    <property type="match status" value="1"/>
</dbReference>
<dbReference type="SUPFAM" id="SSF54843">
    <property type="entry name" value="Ribosomal protein L22"/>
    <property type="match status" value="1"/>
</dbReference>
<dbReference type="PROSITE" id="PS00464">
    <property type="entry name" value="RIBOSOMAL_L22"/>
    <property type="match status" value="1"/>
</dbReference>
<proteinExistence type="inferred from homology"/>
<evidence type="ECO:0000255" key="1">
    <source>
        <dbReference type="HAMAP-Rule" id="MF_01331"/>
    </source>
</evidence>
<evidence type="ECO:0000305" key="2"/>
<name>RL22_BURVG</name>
<keyword id="KW-0687">Ribonucleoprotein</keyword>
<keyword id="KW-0689">Ribosomal protein</keyword>
<keyword id="KW-0694">RNA-binding</keyword>
<keyword id="KW-0699">rRNA-binding</keyword>